<dbReference type="EC" id="3.1.3.-" evidence="1"/>
<dbReference type="EMBL" id="CP000964">
    <property type="protein sequence ID" value="ACI06930.1"/>
    <property type="molecule type" value="Genomic_DNA"/>
</dbReference>
<dbReference type="SMR" id="B5XXL2"/>
<dbReference type="KEGG" id="kpe:KPK_3500"/>
<dbReference type="HOGENOM" id="CLU_061999_0_1_6"/>
<dbReference type="BioCyc" id="KPNE507522:GI0B-3483-MONOMER"/>
<dbReference type="Proteomes" id="UP000001734">
    <property type="component" value="Chromosome"/>
</dbReference>
<dbReference type="GO" id="GO:0005829">
    <property type="term" value="C:cytosol"/>
    <property type="evidence" value="ECO:0007669"/>
    <property type="project" value="TreeGrafter"/>
</dbReference>
<dbReference type="GO" id="GO:0016791">
    <property type="term" value="F:phosphatase activity"/>
    <property type="evidence" value="ECO:0007669"/>
    <property type="project" value="UniProtKB-UniRule"/>
</dbReference>
<dbReference type="GO" id="GO:0008270">
    <property type="term" value="F:zinc ion binding"/>
    <property type="evidence" value="ECO:0007669"/>
    <property type="project" value="UniProtKB-UniRule"/>
</dbReference>
<dbReference type="GO" id="GO:0071978">
    <property type="term" value="P:bacterial-type flagellum-dependent swarming motility"/>
    <property type="evidence" value="ECO:0007669"/>
    <property type="project" value="TreeGrafter"/>
</dbReference>
<dbReference type="CDD" id="cd07437">
    <property type="entry name" value="PHP_HisPPase_Ycdx_like"/>
    <property type="match status" value="1"/>
</dbReference>
<dbReference type="FunFam" id="3.20.20.140:FF:000008">
    <property type="entry name" value="Probable phosphatase YcdX"/>
    <property type="match status" value="1"/>
</dbReference>
<dbReference type="Gene3D" id="3.20.20.140">
    <property type="entry name" value="Metal-dependent hydrolases"/>
    <property type="match status" value="1"/>
</dbReference>
<dbReference type="HAMAP" id="MF_01561">
    <property type="entry name" value="YcdX_phosphat"/>
    <property type="match status" value="1"/>
</dbReference>
<dbReference type="InterPro" id="IPR023710">
    <property type="entry name" value="Phosphatase_YcdX_put"/>
</dbReference>
<dbReference type="InterPro" id="IPR004013">
    <property type="entry name" value="PHP_dom"/>
</dbReference>
<dbReference type="InterPro" id="IPR050243">
    <property type="entry name" value="PHP_phosphatase"/>
</dbReference>
<dbReference type="InterPro" id="IPR003141">
    <property type="entry name" value="Pol/His_phosphatase_N"/>
</dbReference>
<dbReference type="InterPro" id="IPR016195">
    <property type="entry name" value="Pol/histidinol_Pase-like"/>
</dbReference>
<dbReference type="NCBIfam" id="NF006702">
    <property type="entry name" value="PRK09248.1"/>
    <property type="match status" value="1"/>
</dbReference>
<dbReference type="PANTHER" id="PTHR36928">
    <property type="entry name" value="PHOSPHATASE YCDX-RELATED"/>
    <property type="match status" value="1"/>
</dbReference>
<dbReference type="PANTHER" id="PTHR36928:SF1">
    <property type="entry name" value="PHOSPHATASE YCDX-RELATED"/>
    <property type="match status" value="1"/>
</dbReference>
<dbReference type="Pfam" id="PF02811">
    <property type="entry name" value="PHP"/>
    <property type="match status" value="1"/>
</dbReference>
<dbReference type="SMART" id="SM00481">
    <property type="entry name" value="POLIIIAc"/>
    <property type="match status" value="1"/>
</dbReference>
<dbReference type="SUPFAM" id="SSF89550">
    <property type="entry name" value="PHP domain-like"/>
    <property type="match status" value="1"/>
</dbReference>
<sequence length="245" mass="26956">MYPVDLHMHTVASTHAYSTLHDYIAEAKRKGIKLFAITDHGPDMADAPHYWHFVNMRIWPRLVDGVGILRGIESNIKNIEGEIDCSGPMLTSLDLIIAGFHEPVFPPQDRDTHTQAMIAAMASGKVHMISHPGNPKFPVDIPAIAEAAARYQVALEINNSSFISSRVGSEDNCRAIAAAVRDAGGWVALGSDSHTAFTLGEFTECRKILDAVDFPEERILNVSPRRLLNFLESRGMPAIPEFADL</sequence>
<comment type="cofactor">
    <cofactor evidence="1">
        <name>Zn(2+)</name>
        <dbReference type="ChEBI" id="CHEBI:29105"/>
    </cofactor>
    <text evidence="1">Binds 3 Zn(2+) ions per subunit.</text>
</comment>
<comment type="subunit">
    <text evidence="1">Homotrimer.</text>
</comment>
<comment type="similarity">
    <text evidence="1">Belongs to the PHP family.</text>
</comment>
<reference key="1">
    <citation type="journal article" date="2008" name="PLoS Genet.">
        <title>Complete genome sequence of the N2-fixing broad host range endophyte Klebsiella pneumoniae 342 and virulence predictions verified in mice.</title>
        <authorList>
            <person name="Fouts D.E."/>
            <person name="Tyler H.L."/>
            <person name="DeBoy R.T."/>
            <person name="Daugherty S."/>
            <person name="Ren Q."/>
            <person name="Badger J.H."/>
            <person name="Durkin A.S."/>
            <person name="Huot H."/>
            <person name="Shrivastava S."/>
            <person name="Kothari S."/>
            <person name="Dodson R.J."/>
            <person name="Mohamoud Y."/>
            <person name="Khouri H."/>
            <person name="Roesch L.F.W."/>
            <person name="Krogfelt K.A."/>
            <person name="Struve C."/>
            <person name="Triplett E.W."/>
            <person name="Methe B.A."/>
        </authorList>
    </citation>
    <scope>NUCLEOTIDE SEQUENCE [LARGE SCALE GENOMIC DNA]</scope>
    <source>
        <strain>342</strain>
    </source>
</reference>
<keyword id="KW-0378">Hydrolase</keyword>
<keyword id="KW-0479">Metal-binding</keyword>
<keyword id="KW-0862">Zinc</keyword>
<accession>B5XXL2</accession>
<proteinExistence type="inferred from homology"/>
<gene>
    <name type="ordered locus">KPK_3500</name>
</gene>
<feature type="chain" id="PRO_1000147138" description="Probable phosphatase KPK_3500">
    <location>
        <begin position="1"/>
        <end position="245"/>
    </location>
</feature>
<feature type="binding site" evidence="1">
    <location>
        <position position="7"/>
    </location>
    <ligand>
        <name>Zn(2+)</name>
        <dbReference type="ChEBI" id="CHEBI:29105"/>
        <label>1</label>
    </ligand>
</feature>
<feature type="binding site" evidence="1">
    <location>
        <position position="9"/>
    </location>
    <ligand>
        <name>Zn(2+)</name>
        <dbReference type="ChEBI" id="CHEBI:29105"/>
        <label>1</label>
    </ligand>
</feature>
<feature type="binding site" evidence="1">
    <location>
        <position position="15"/>
    </location>
    <ligand>
        <name>Zn(2+)</name>
        <dbReference type="ChEBI" id="CHEBI:29105"/>
        <label>2</label>
    </ligand>
</feature>
<feature type="binding site" evidence="1">
    <location>
        <position position="40"/>
    </location>
    <ligand>
        <name>Zn(2+)</name>
        <dbReference type="ChEBI" id="CHEBI:29105"/>
        <label>2</label>
    </ligand>
</feature>
<feature type="binding site" evidence="1">
    <location>
        <position position="73"/>
    </location>
    <ligand>
        <name>Zn(2+)</name>
        <dbReference type="ChEBI" id="CHEBI:29105"/>
        <label>1</label>
    </ligand>
</feature>
<feature type="binding site" evidence="1">
    <location>
        <position position="73"/>
    </location>
    <ligand>
        <name>Zn(2+)</name>
        <dbReference type="ChEBI" id="CHEBI:29105"/>
        <label>3</label>
    </ligand>
</feature>
<feature type="binding site" evidence="1">
    <location>
        <position position="101"/>
    </location>
    <ligand>
        <name>Zn(2+)</name>
        <dbReference type="ChEBI" id="CHEBI:29105"/>
        <label>3</label>
    </ligand>
</feature>
<feature type="binding site" evidence="1">
    <location>
        <position position="131"/>
    </location>
    <ligand>
        <name>Zn(2+)</name>
        <dbReference type="ChEBI" id="CHEBI:29105"/>
        <label>3</label>
    </ligand>
</feature>
<feature type="binding site" evidence="1">
    <location>
        <position position="192"/>
    </location>
    <ligand>
        <name>Zn(2+)</name>
        <dbReference type="ChEBI" id="CHEBI:29105"/>
        <label>1</label>
    </ligand>
</feature>
<feature type="binding site" evidence="1">
    <location>
        <position position="194"/>
    </location>
    <ligand>
        <name>Zn(2+)</name>
        <dbReference type="ChEBI" id="CHEBI:29105"/>
        <label>2</label>
    </ligand>
</feature>
<protein>
    <recommendedName>
        <fullName evidence="1">Probable phosphatase KPK_3500</fullName>
        <ecNumber evidence="1">3.1.3.-</ecNumber>
    </recommendedName>
</protein>
<evidence type="ECO:0000255" key="1">
    <source>
        <dbReference type="HAMAP-Rule" id="MF_01561"/>
    </source>
</evidence>
<organism>
    <name type="scientific">Klebsiella pneumoniae (strain 342)</name>
    <dbReference type="NCBI Taxonomy" id="507522"/>
    <lineage>
        <taxon>Bacteria</taxon>
        <taxon>Pseudomonadati</taxon>
        <taxon>Pseudomonadota</taxon>
        <taxon>Gammaproteobacteria</taxon>
        <taxon>Enterobacterales</taxon>
        <taxon>Enterobacteriaceae</taxon>
        <taxon>Klebsiella/Raoultella group</taxon>
        <taxon>Klebsiella</taxon>
        <taxon>Klebsiella pneumoniae complex</taxon>
    </lineage>
</organism>
<name>Y3500_KLEP3</name>